<organism>
    <name type="scientific">Rhodococcus jostii (strain RHA1)</name>
    <dbReference type="NCBI Taxonomy" id="101510"/>
    <lineage>
        <taxon>Bacteria</taxon>
        <taxon>Bacillati</taxon>
        <taxon>Actinomycetota</taxon>
        <taxon>Actinomycetes</taxon>
        <taxon>Mycobacteriales</taxon>
        <taxon>Nocardiaceae</taxon>
        <taxon>Rhodococcus</taxon>
    </lineage>
</organism>
<sequence>MATASPHEIAHKLGSGLLSFPVTHFKDDHSFDEAAYRENIGWLGQFDASGLFAAGGTGEFFSLTPPEVEQVVRAAVQEAPDGLPVIAPAGYGTSTAVQMARSAESVGAHGILLLPPYLTEASQDGLVAHVKEVCAATTLGVTIYSRANAVYTEAAVAELADSCPNLVGFKDGVGNIEQMTRIYASLGDRLTYIGGLPTAEMFALPYLALGVTTYSSAIYNFVPKFAIDFYNALRSGDNAFVINALNEFVIPYCNLRNKKQGYAVSIIKAGMTVIDRPAGPVRAPLTDLDAVELAELADLIKKVS</sequence>
<proteinExistence type="inferred from homology"/>
<protein>
    <recommendedName>
        <fullName evidence="1">Probable 5-dehydro-4-deoxyglucarate dehydratase</fullName>
        <ecNumber evidence="1">4.2.1.41</ecNumber>
    </recommendedName>
    <alternativeName>
        <fullName evidence="1">5-keto-4-deoxy-glucarate dehydratase</fullName>
        <shortName evidence="1">KDGDH</shortName>
    </alternativeName>
</protein>
<reference key="1">
    <citation type="journal article" date="2006" name="Proc. Natl. Acad. Sci. U.S.A.">
        <title>The complete genome of Rhodococcus sp. RHA1 provides insights into a catabolic powerhouse.</title>
        <authorList>
            <person name="McLeod M.P."/>
            <person name="Warren R.L."/>
            <person name="Hsiao W.W.L."/>
            <person name="Araki N."/>
            <person name="Myhre M."/>
            <person name="Fernandes C."/>
            <person name="Miyazawa D."/>
            <person name="Wong W."/>
            <person name="Lillquist A.L."/>
            <person name="Wang D."/>
            <person name="Dosanjh M."/>
            <person name="Hara H."/>
            <person name="Petrescu A."/>
            <person name="Morin R.D."/>
            <person name="Yang G."/>
            <person name="Stott J.M."/>
            <person name="Schein J.E."/>
            <person name="Shin H."/>
            <person name="Smailus D."/>
            <person name="Siddiqui A.S."/>
            <person name="Marra M.A."/>
            <person name="Jones S.J.M."/>
            <person name="Holt R."/>
            <person name="Brinkman F.S.L."/>
            <person name="Miyauchi K."/>
            <person name="Fukuda M."/>
            <person name="Davies J.E."/>
            <person name="Mohn W.W."/>
            <person name="Eltis L.D."/>
        </authorList>
    </citation>
    <scope>NUCLEOTIDE SEQUENCE [LARGE SCALE GENOMIC DNA]</scope>
    <source>
        <strain>RHA1</strain>
    </source>
</reference>
<keyword id="KW-0456">Lyase</keyword>
<evidence type="ECO:0000255" key="1">
    <source>
        <dbReference type="HAMAP-Rule" id="MF_00694"/>
    </source>
</evidence>
<dbReference type="EC" id="4.2.1.41" evidence="1"/>
<dbReference type="EMBL" id="CP000431">
    <property type="protein sequence ID" value="ABG95107.1"/>
    <property type="molecule type" value="Genomic_DNA"/>
</dbReference>
<dbReference type="RefSeq" id="WP_011595953.1">
    <property type="nucleotide sequence ID" value="NC_008268.1"/>
</dbReference>
<dbReference type="SMR" id="Q0SBH9"/>
<dbReference type="KEGG" id="rha:RHA1_ro03304"/>
<dbReference type="PATRIC" id="fig|101510.16.peg.3329"/>
<dbReference type="eggNOG" id="COG0329">
    <property type="taxonomic scope" value="Bacteria"/>
</dbReference>
<dbReference type="HOGENOM" id="CLU_049343_5_2_11"/>
<dbReference type="OrthoDB" id="8995637at2"/>
<dbReference type="UniPathway" id="UPA00564">
    <property type="reaction ID" value="UER00628"/>
</dbReference>
<dbReference type="Proteomes" id="UP000008710">
    <property type="component" value="Chromosome"/>
</dbReference>
<dbReference type="GO" id="GO:0008840">
    <property type="term" value="F:4-hydroxy-tetrahydrodipicolinate synthase activity"/>
    <property type="evidence" value="ECO:0007669"/>
    <property type="project" value="TreeGrafter"/>
</dbReference>
<dbReference type="GO" id="GO:0047448">
    <property type="term" value="F:5-dehydro-4-deoxyglucarate dehydratase activity"/>
    <property type="evidence" value="ECO:0007669"/>
    <property type="project" value="UniProtKB-UniRule"/>
</dbReference>
<dbReference type="GO" id="GO:0042838">
    <property type="term" value="P:D-glucarate catabolic process"/>
    <property type="evidence" value="ECO:0007669"/>
    <property type="project" value="UniProtKB-UniRule"/>
</dbReference>
<dbReference type="CDD" id="cd00951">
    <property type="entry name" value="KDGDH"/>
    <property type="match status" value="1"/>
</dbReference>
<dbReference type="Gene3D" id="3.20.20.70">
    <property type="entry name" value="Aldolase class I"/>
    <property type="match status" value="1"/>
</dbReference>
<dbReference type="HAMAP" id="MF_00694">
    <property type="entry name" value="KDGDH"/>
    <property type="match status" value="1"/>
</dbReference>
<dbReference type="InterPro" id="IPR013785">
    <property type="entry name" value="Aldolase_TIM"/>
</dbReference>
<dbReference type="InterPro" id="IPR002220">
    <property type="entry name" value="DapA-like"/>
</dbReference>
<dbReference type="InterPro" id="IPR017655">
    <property type="entry name" value="Dehydro-deoxyglucarate_dehyd"/>
</dbReference>
<dbReference type="NCBIfam" id="TIGR03249">
    <property type="entry name" value="KdgD"/>
    <property type="match status" value="1"/>
</dbReference>
<dbReference type="NCBIfam" id="NF002958">
    <property type="entry name" value="PRK03620.1"/>
    <property type="match status" value="1"/>
</dbReference>
<dbReference type="PANTHER" id="PTHR12128:SF19">
    <property type="entry name" value="5-DEHYDRO-4-DEOXYGLUCARATE DEHYDRATASE 2-RELATED"/>
    <property type="match status" value="1"/>
</dbReference>
<dbReference type="PANTHER" id="PTHR12128">
    <property type="entry name" value="DIHYDRODIPICOLINATE SYNTHASE"/>
    <property type="match status" value="1"/>
</dbReference>
<dbReference type="Pfam" id="PF00701">
    <property type="entry name" value="DHDPS"/>
    <property type="match status" value="1"/>
</dbReference>
<dbReference type="PIRSF" id="PIRSF001365">
    <property type="entry name" value="DHDPS"/>
    <property type="match status" value="1"/>
</dbReference>
<dbReference type="SMART" id="SM01130">
    <property type="entry name" value="DHDPS"/>
    <property type="match status" value="1"/>
</dbReference>
<dbReference type="SUPFAM" id="SSF51569">
    <property type="entry name" value="Aldolase"/>
    <property type="match status" value="1"/>
</dbReference>
<comment type="catalytic activity">
    <reaction evidence="1">
        <text>5-dehydro-4-deoxy-D-glucarate + H(+) = 2,5-dioxopentanoate + CO2 + H2O</text>
        <dbReference type="Rhea" id="RHEA:24608"/>
        <dbReference type="ChEBI" id="CHEBI:15377"/>
        <dbReference type="ChEBI" id="CHEBI:15378"/>
        <dbReference type="ChEBI" id="CHEBI:16526"/>
        <dbReference type="ChEBI" id="CHEBI:42819"/>
        <dbReference type="ChEBI" id="CHEBI:58136"/>
        <dbReference type="EC" id="4.2.1.41"/>
    </reaction>
</comment>
<comment type="pathway">
    <text evidence="1">Carbohydrate acid metabolism; D-glucarate degradation; 2,5-dioxopentanoate from D-glucarate: step 2/2.</text>
</comment>
<comment type="similarity">
    <text evidence="1">Belongs to the DapA family.</text>
</comment>
<feature type="chain" id="PRO_1000045412" description="Probable 5-dehydro-4-deoxyglucarate dehydratase">
    <location>
        <begin position="1"/>
        <end position="304"/>
    </location>
</feature>
<name>KDGD_RHOJR</name>
<accession>Q0SBH9</accession>
<gene>
    <name type="ordered locus">RHA1_ro03304</name>
</gene>